<accession>B9DWC7</accession>
<comment type="function">
    <text evidence="1">One of the primary rRNA binding proteins, it binds directly to 16S rRNA where it nucleates assembly of the body of the 30S subunit.</text>
</comment>
<comment type="function">
    <text evidence="1">With S5 and S12 plays an important role in translational accuracy.</text>
</comment>
<comment type="subunit">
    <text evidence="1">Part of the 30S ribosomal subunit. Contacts protein S5. The interaction surface between S4 and S5 is involved in control of translational fidelity.</text>
</comment>
<comment type="similarity">
    <text evidence="1">Belongs to the universal ribosomal protein uS4 family.</text>
</comment>
<name>RS4_STRU0</name>
<proteinExistence type="inferred from homology"/>
<feature type="chain" id="PRO_1000165428" description="Small ribosomal subunit protein uS4">
    <location>
        <begin position="1"/>
        <end position="203"/>
    </location>
</feature>
<feature type="domain" description="S4 RNA-binding" evidence="1">
    <location>
        <begin position="93"/>
        <end position="156"/>
    </location>
</feature>
<reference key="1">
    <citation type="journal article" date="2009" name="BMC Genomics">
        <title>Evidence for niche adaptation in the genome of the bovine pathogen Streptococcus uberis.</title>
        <authorList>
            <person name="Ward P.N."/>
            <person name="Holden M.T.G."/>
            <person name="Leigh J.A."/>
            <person name="Lennard N."/>
            <person name="Bignell A."/>
            <person name="Barron A."/>
            <person name="Clark L."/>
            <person name="Quail M.A."/>
            <person name="Woodward J."/>
            <person name="Barrell B.G."/>
            <person name="Egan S.A."/>
            <person name="Field T.R."/>
            <person name="Maskell D."/>
            <person name="Kehoe M."/>
            <person name="Dowson C.G."/>
            <person name="Chanter N."/>
            <person name="Whatmore A.M."/>
            <person name="Bentley S.D."/>
            <person name="Parkhill J."/>
        </authorList>
    </citation>
    <scope>NUCLEOTIDE SEQUENCE [LARGE SCALE GENOMIC DNA]</scope>
    <source>
        <strain>ATCC BAA-854 / 0140J</strain>
    </source>
</reference>
<organism>
    <name type="scientific">Streptococcus uberis (strain ATCC BAA-854 / 0140J)</name>
    <dbReference type="NCBI Taxonomy" id="218495"/>
    <lineage>
        <taxon>Bacteria</taxon>
        <taxon>Bacillati</taxon>
        <taxon>Bacillota</taxon>
        <taxon>Bacilli</taxon>
        <taxon>Lactobacillales</taxon>
        <taxon>Streptococcaceae</taxon>
        <taxon>Streptococcus</taxon>
    </lineage>
</organism>
<gene>
    <name evidence="1" type="primary">rpsD</name>
    <name type="ordered locus">SUB1841</name>
</gene>
<dbReference type="EMBL" id="AM946015">
    <property type="protein sequence ID" value="CAR43894.1"/>
    <property type="molecule type" value="Genomic_DNA"/>
</dbReference>
<dbReference type="RefSeq" id="WP_015912126.1">
    <property type="nucleotide sequence ID" value="NC_012004.1"/>
</dbReference>
<dbReference type="SMR" id="B9DWC7"/>
<dbReference type="STRING" id="218495.SUB1841"/>
<dbReference type="GeneID" id="93827135"/>
<dbReference type="KEGG" id="sub:SUB1841"/>
<dbReference type="eggNOG" id="COG0522">
    <property type="taxonomic scope" value="Bacteria"/>
</dbReference>
<dbReference type="HOGENOM" id="CLU_092403_0_1_9"/>
<dbReference type="OrthoDB" id="9803672at2"/>
<dbReference type="Proteomes" id="UP000000449">
    <property type="component" value="Chromosome"/>
</dbReference>
<dbReference type="GO" id="GO:0015935">
    <property type="term" value="C:small ribosomal subunit"/>
    <property type="evidence" value="ECO:0007669"/>
    <property type="project" value="InterPro"/>
</dbReference>
<dbReference type="GO" id="GO:0019843">
    <property type="term" value="F:rRNA binding"/>
    <property type="evidence" value="ECO:0007669"/>
    <property type="project" value="UniProtKB-UniRule"/>
</dbReference>
<dbReference type="GO" id="GO:0003735">
    <property type="term" value="F:structural constituent of ribosome"/>
    <property type="evidence" value="ECO:0007669"/>
    <property type="project" value="InterPro"/>
</dbReference>
<dbReference type="GO" id="GO:0042274">
    <property type="term" value="P:ribosomal small subunit biogenesis"/>
    <property type="evidence" value="ECO:0007669"/>
    <property type="project" value="TreeGrafter"/>
</dbReference>
<dbReference type="GO" id="GO:0006412">
    <property type="term" value="P:translation"/>
    <property type="evidence" value="ECO:0007669"/>
    <property type="project" value="UniProtKB-UniRule"/>
</dbReference>
<dbReference type="CDD" id="cd00165">
    <property type="entry name" value="S4"/>
    <property type="match status" value="1"/>
</dbReference>
<dbReference type="FunFam" id="1.10.1050.10:FF:000001">
    <property type="entry name" value="30S ribosomal protein S4"/>
    <property type="match status" value="1"/>
</dbReference>
<dbReference type="FunFam" id="3.10.290.10:FF:000001">
    <property type="entry name" value="30S ribosomal protein S4"/>
    <property type="match status" value="1"/>
</dbReference>
<dbReference type="Gene3D" id="1.10.1050.10">
    <property type="entry name" value="Ribosomal Protein S4 Delta 41, Chain A, domain 1"/>
    <property type="match status" value="1"/>
</dbReference>
<dbReference type="Gene3D" id="3.10.290.10">
    <property type="entry name" value="RNA-binding S4 domain"/>
    <property type="match status" value="1"/>
</dbReference>
<dbReference type="HAMAP" id="MF_01306_B">
    <property type="entry name" value="Ribosomal_uS4_B"/>
    <property type="match status" value="1"/>
</dbReference>
<dbReference type="InterPro" id="IPR022801">
    <property type="entry name" value="Ribosomal_uS4"/>
</dbReference>
<dbReference type="InterPro" id="IPR005709">
    <property type="entry name" value="Ribosomal_uS4_bac-type"/>
</dbReference>
<dbReference type="InterPro" id="IPR018079">
    <property type="entry name" value="Ribosomal_uS4_CS"/>
</dbReference>
<dbReference type="InterPro" id="IPR001912">
    <property type="entry name" value="Ribosomal_uS4_N"/>
</dbReference>
<dbReference type="InterPro" id="IPR002942">
    <property type="entry name" value="S4_RNA-bd"/>
</dbReference>
<dbReference type="InterPro" id="IPR036986">
    <property type="entry name" value="S4_RNA-bd_sf"/>
</dbReference>
<dbReference type="NCBIfam" id="NF003717">
    <property type="entry name" value="PRK05327.1"/>
    <property type="match status" value="1"/>
</dbReference>
<dbReference type="NCBIfam" id="TIGR01017">
    <property type="entry name" value="rpsD_bact"/>
    <property type="match status" value="1"/>
</dbReference>
<dbReference type="PANTHER" id="PTHR11831">
    <property type="entry name" value="30S 40S RIBOSOMAL PROTEIN"/>
    <property type="match status" value="1"/>
</dbReference>
<dbReference type="PANTHER" id="PTHR11831:SF4">
    <property type="entry name" value="SMALL RIBOSOMAL SUBUNIT PROTEIN US4M"/>
    <property type="match status" value="1"/>
</dbReference>
<dbReference type="Pfam" id="PF00163">
    <property type="entry name" value="Ribosomal_S4"/>
    <property type="match status" value="1"/>
</dbReference>
<dbReference type="Pfam" id="PF01479">
    <property type="entry name" value="S4"/>
    <property type="match status" value="1"/>
</dbReference>
<dbReference type="SMART" id="SM01390">
    <property type="entry name" value="Ribosomal_S4"/>
    <property type="match status" value="1"/>
</dbReference>
<dbReference type="SMART" id="SM00363">
    <property type="entry name" value="S4"/>
    <property type="match status" value="1"/>
</dbReference>
<dbReference type="SUPFAM" id="SSF55174">
    <property type="entry name" value="Alpha-L RNA-binding motif"/>
    <property type="match status" value="1"/>
</dbReference>
<dbReference type="PROSITE" id="PS00632">
    <property type="entry name" value="RIBOSOMAL_S4"/>
    <property type="match status" value="1"/>
</dbReference>
<dbReference type="PROSITE" id="PS50889">
    <property type="entry name" value="S4"/>
    <property type="match status" value="1"/>
</dbReference>
<evidence type="ECO:0000255" key="1">
    <source>
        <dbReference type="HAMAP-Rule" id="MF_01306"/>
    </source>
</evidence>
<evidence type="ECO:0000305" key="2"/>
<sequence>MSRYTGPSWKQSRRLGLSLTGTGKELARRNYVPGQHGPNNRSKLSEYGLQLAEKQKLRFSYGLGEKQFRNLFVQATKIKEGTLGFNFMILLERRLDNVVYRLGLATTRRQARQFVNHGHILVDGKRVDIPSYRVEPGQVISVREKSMKVPAILEAVEATLGRPAFVSFDAEKLEGSLTRLPERDEINPEINEALVVEFYNKML</sequence>
<protein>
    <recommendedName>
        <fullName evidence="1">Small ribosomal subunit protein uS4</fullName>
    </recommendedName>
    <alternativeName>
        <fullName evidence="2">30S ribosomal protein S4</fullName>
    </alternativeName>
</protein>
<keyword id="KW-1185">Reference proteome</keyword>
<keyword id="KW-0687">Ribonucleoprotein</keyword>
<keyword id="KW-0689">Ribosomal protein</keyword>
<keyword id="KW-0694">RNA-binding</keyword>
<keyword id="KW-0699">rRNA-binding</keyword>